<comment type="function">
    <text evidence="1">Involved in unsaturated fatty acids biosynthesis. Catalyzes the dehydration of short chain beta-hydroxyacyl-ACPs and long chain saturated and unsaturated beta-hydroxyacyl-ACPs.</text>
</comment>
<comment type="catalytic activity">
    <reaction evidence="1">
        <text>a (3R)-hydroxyacyl-[ACP] = a (2E)-enoyl-[ACP] + H2O</text>
        <dbReference type="Rhea" id="RHEA:13097"/>
        <dbReference type="Rhea" id="RHEA-COMP:9925"/>
        <dbReference type="Rhea" id="RHEA-COMP:9945"/>
        <dbReference type="ChEBI" id="CHEBI:15377"/>
        <dbReference type="ChEBI" id="CHEBI:78784"/>
        <dbReference type="ChEBI" id="CHEBI:78827"/>
        <dbReference type="EC" id="4.2.1.59"/>
    </reaction>
</comment>
<comment type="subcellular location">
    <subcellularLocation>
        <location evidence="1">Cytoplasm</location>
    </subcellularLocation>
</comment>
<comment type="similarity">
    <text evidence="1">Belongs to the thioester dehydratase family. FabZ subfamily.</text>
</comment>
<proteinExistence type="inferred from homology"/>
<dbReference type="EC" id="4.2.1.59" evidence="1"/>
<dbReference type="EMBL" id="CP000644">
    <property type="protein sequence ID" value="ABO91143.1"/>
    <property type="molecule type" value="Genomic_DNA"/>
</dbReference>
<dbReference type="RefSeq" id="WP_005312091.1">
    <property type="nucleotide sequence ID" value="NC_009348.1"/>
</dbReference>
<dbReference type="SMR" id="A4SQH1"/>
<dbReference type="STRING" id="29491.GCA_000820065_03529"/>
<dbReference type="GeneID" id="79880873"/>
<dbReference type="KEGG" id="asa:ASA_3149"/>
<dbReference type="eggNOG" id="COG0764">
    <property type="taxonomic scope" value="Bacteria"/>
</dbReference>
<dbReference type="HOGENOM" id="CLU_078912_1_0_6"/>
<dbReference type="Proteomes" id="UP000000225">
    <property type="component" value="Chromosome"/>
</dbReference>
<dbReference type="GO" id="GO:0005737">
    <property type="term" value="C:cytoplasm"/>
    <property type="evidence" value="ECO:0007669"/>
    <property type="project" value="UniProtKB-SubCell"/>
</dbReference>
<dbReference type="GO" id="GO:0016020">
    <property type="term" value="C:membrane"/>
    <property type="evidence" value="ECO:0007669"/>
    <property type="project" value="GOC"/>
</dbReference>
<dbReference type="GO" id="GO:0019171">
    <property type="term" value="F:(3R)-hydroxyacyl-[acyl-carrier-protein] dehydratase activity"/>
    <property type="evidence" value="ECO:0007669"/>
    <property type="project" value="UniProtKB-EC"/>
</dbReference>
<dbReference type="GO" id="GO:0006633">
    <property type="term" value="P:fatty acid biosynthetic process"/>
    <property type="evidence" value="ECO:0007669"/>
    <property type="project" value="UniProtKB-UniRule"/>
</dbReference>
<dbReference type="GO" id="GO:0009245">
    <property type="term" value="P:lipid A biosynthetic process"/>
    <property type="evidence" value="ECO:0007669"/>
    <property type="project" value="UniProtKB-UniRule"/>
</dbReference>
<dbReference type="CDD" id="cd01288">
    <property type="entry name" value="FabZ"/>
    <property type="match status" value="1"/>
</dbReference>
<dbReference type="FunFam" id="3.10.129.10:FF:000001">
    <property type="entry name" value="3-hydroxyacyl-[acyl-carrier-protein] dehydratase FabZ"/>
    <property type="match status" value="1"/>
</dbReference>
<dbReference type="Gene3D" id="3.10.129.10">
    <property type="entry name" value="Hotdog Thioesterase"/>
    <property type="match status" value="1"/>
</dbReference>
<dbReference type="HAMAP" id="MF_00406">
    <property type="entry name" value="FabZ"/>
    <property type="match status" value="1"/>
</dbReference>
<dbReference type="InterPro" id="IPR013114">
    <property type="entry name" value="FabA_FabZ"/>
</dbReference>
<dbReference type="InterPro" id="IPR010084">
    <property type="entry name" value="FabZ"/>
</dbReference>
<dbReference type="InterPro" id="IPR029069">
    <property type="entry name" value="HotDog_dom_sf"/>
</dbReference>
<dbReference type="NCBIfam" id="TIGR01750">
    <property type="entry name" value="fabZ"/>
    <property type="match status" value="1"/>
</dbReference>
<dbReference type="NCBIfam" id="NF000582">
    <property type="entry name" value="PRK00006.1"/>
    <property type="match status" value="1"/>
</dbReference>
<dbReference type="PANTHER" id="PTHR30272">
    <property type="entry name" value="3-HYDROXYACYL-[ACYL-CARRIER-PROTEIN] DEHYDRATASE"/>
    <property type="match status" value="1"/>
</dbReference>
<dbReference type="PANTHER" id="PTHR30272:SF1">
    <property type="entry name" value="3-HYDROXYACYL-[ACYL-CARRIER-PROTEIN] DEHYDRATASE"/>
    <property type="match status" value="1"/>
</dbReference>
<dbReference type="Pfam" id="PF07977">
    <property type="entry name" value="FabA"/>
    <property type="match status" value="1"/>
</dbReference>
<dbReference type="SUPFAM" id="SSF54637">
    <property type="entry name" value="Thioesterase/thiol ester dehydrase-isomerase"/>
    <property type="match status" value="1"/>
</dbReference>
<gene>
    <name evidence="1" type="primary">fabZ</name>
    <name type="ordered locus">ASA_3149</name>
</gene>
<reference key="1">
    <citation type="journal article" date="2008" name="BMC Genomics">
        <title>The genome of Aeromonas salmonicida subsp. salmonicida A449: insights into the evolution of a fish pathogen.</title>
        <authorList>
            <person name="Reith M.E."/>
            <person name="Singh R.K."/>
            <person name="Curtis B."/>
            <person name="Boyd J.M."/>
            <person name="Bouevitch A."/>
            <person name="Kimball J."/>
            <person name="Munholland J."/>
            <person name="Murphy C."/>
            <person name="Sarty D."/>
            <person name="Williams J."/>
            <person name="Nash J.H."/>
            <person name="Johnson S.C."/>
            <person name="Brown L.L."/>
        </authorList>
    </citation>
    <scope>NUCLEOTIDE SEQUENCE [LARGE SCALE GENOMIC DNA]</scope>
    <source>
        <strain>A449</strain>
    </source>
</reference>
<keyword id="KW-0963">Cytoplasm</keyword>
<keyword id="KW-0441">Lipid A biosynthesis</keyword>
<keyword id="KW-0444">Lipid biosynthesis</keyword>
<keyword id="KW-0443">Lipid metabolism</keyword>
<keyword id="KW-0456">Lyase</keyword>
<organism>
    <name type="scientific">Aeromonas salmonicida (strain A449)</name>
    <dbReference type="NCBI Taxonomy" id="382245"/>
    <lineage>
        <taxon>Bacteria</taxon>
        <taxon>Pseudomonadati</taxon>
        <taxon>Pseudomonadota</taxon>
        <taxon>Gammaproteobacteria</taxon>
        <taxon>Aeromonadales</taxon>
        <taxon>Aeromonadaceae</taxon>
        <taxon>Aeromonas</taxon>
    </lineage>
</organism>
<feature type="chain" id="PRO_1000072266" description="3-hydroxyacyl-[acyl-carrier-protein] dehydratase FabZ">
    <location>
        <begin position="1"/>
        <end position="153"/>
    </location>
</feature>
<feature type="active site" evidence="1">
    <location>
        <position position="57"/>
    </location>
</feature>
<sequence length="153" mass="17167">MTTEKKSLGIQEIMDLLPHRYPFLMVDRVDDYEISDERKTLRAIKNVSFNEPIFQGHFPAKPVFPGVLILEAMAQATGILAFTMVGKPSPNELYYFASIDNARFKRPVGPGDQLVLDVEFLKERRGIAKFTGVATVNGEVVCTAELMCAKREV</sequence>
<accession>A4SQH1</accession>
<name>FABZ_AERS4</name>
<protein>
    <recommendedName>
        <fullName evidence="1">3-hydroxyacyl-[acyl-carrier-protein] dehydratase FabZ</fullName>
        <ecNumber evidence="1">4.2.1.59</ecNumber>
    </recommendedName>
    <alternativeName>
        <fullName evidence="1">(3R)-hydroxymyristoyl-[acyl-carrier-protein] dehydratase</fullName>
        <shortName evidence="1">(3R)-hydroxymyristoyl-ACP dehydrase</shortName>
    </alternativeName>
    <alternativeName>
        <fullName evidence="1">Beta-hydroxyacyl-ACP dehydratase</fullName>
    </alternativeName>
</protein>
<evidence type="ECO:0000255" key="1">
    <source>
        <dbReference type="HAMAP-Rule" id="MF_00406"/>
    </source>
</evidence>